<organism>
    <name type="scientific">Methylacidiphilum infernorum (isolate V4)</name>
    <name type="common">Methylokorus infernorum (strain V4)</name>
    <dbReference type="NCBI Taxonomy" id="481448"/>
    <lineage>
        <taxon>Bacteria</taxon>
        <taxon>Pseudomonadati</taxon>
        <taxon>Verrucomicrobiota</taxon>
        <taxon>Methylacidiphilae</taxon>
        <taxon>Methylacidiphilales</taxon>
        <taxon>Methylacidiphilaceae</taxon>
        <taxon>Methylacidiphilum (ex Ratnadevi et al. 2023)</taxon>
    </lineage>
</organism>
<accession>B3DUG9</accession>
<sequence length="190" mass="21388">MILKLVLYDNPILRKKGMPIDSFDDRLKRLVQDMLETMAYYKGVGLAAQQVGLNLQLAVIDVSGSKLSSSLLIGGKPAMVEEHMPLFLINPTLSYTQSKEISNEGCLSFPGLRIDVPRSKRVKVKTFDLEGRPWYFEAGGFLSVAIQHEFDHLQGKLFIDYLSAEQKKAIKEELEKIKRGEAILSVKETD</sequence>
<protein>
    <recommendedName>
        <fullName evidence="1">Peptide deformylase</fullName>
        <shortName evidence="1">PDF</shortName>
        <ecNumber evidence="1">3.5.1.88</ecNumber>
    </recommendedName>
    <alternativeName>
        <fullName evidence="1">Polypeptide deformylase</fullName>
    </alternativeName>
</protein>
<name>DEF_METI4</name>
<reference key="1">
    <citation type="journal article" date="2008" name="Biol. Direct">
        <title>Complete genome sequence of the extremely acidophilic methanotroph isolate V4, Methylacidiphilum infernorum, a representative of the bacterial phylum Verrucomicrobia.</title>
        <authorList>
            <person name="Hou S."/>
            <person name="Makarova K.S."/>
            <person name="Saw J.H."/>
            <person name="Senin P."/>
            <person name="Ly B.V."/>
            <person name="Zhou Z."/>
            <person name="Ren Y."/>
            <person name="Wang J."/>
            <person name="Galperin M.Y."/>
            <person name="Omelchenko M.V."/>
            <person name="Wolf Y.I."/>
            <person name="Yutin N."/>
            <person name="Koonin E.V."/>
            <person name="Stott M.B."/>
            <person name="Mountain B.W."/>
            <person name="Crowe M.A."/>
            <person name="Smirnova A.V."/>
            <person name="Dunfield P.F."/>
            <person name="Feng L."/>
            <person name="Wang L."/>
            <person name="Alam M."/>
        </authorList>
    </citation>
    <scope>NUCLEOTIDE SEQUENCE [LARGE SCALE GENOMIC DNA]</scope>
    <source>
        <strain>Isolate V4</strain>
    </source>
</reference>
<dbReference type="EC" id="3.5.1.88" evidence="1"/>
<dbReference type="EMBL" id="CP000975">
    <property type="protein sequence ID" value="ACD82972.1"/>
    <property type="molecule type" value="Genomic_DNA"/>
</dbReference>
<dbReference type="RefSeq" id="WP_012463254.1">
    <property type="nucleotide sequence ID" value="NC_010794.1"/>
</dbReference>
<dbReference type="SMR" id="B3DUG9"/>
<dbReference type="STRING" id="481448.Minf_0917"/>
<dbReference type="KEGG" id="min:Minf_0917"/>
<dbReference type="eggNOG" id="COG0242">
    <property type="taxonomic scope" value="Bacteria"/>
</dbReference>
<dbReference type="HOGENOM" id="CLU_061901_2_1_0"/>
<dbReference type="OrthoDB" id="9784988at2"/>
<dbReference type="Proteomes" id="UP000009149">
    <property type="component" value="Chromosome"/>
</dbReference>
<dbReference type="GO" id="GO:0046872">
    <property type="term" value="F:metal ion binding"/>
    <property type="evidence" value="ECO:0007669"/>
    <property type="project" value="UniProtKB-KW"/>
</dbReference>
<dbReference type="GO" id="GO:0042586">
    <property type="term" value="F:peptide deformylase activity"/>
    <property type="evidence" value="ECO:0007669"/>
    <property type="project" value="UniProtKB-UniRule"/>
</dbReference>
<dbReference type="GO" id="GO:0043686">
    <property type="term" value="P:co-translational protein modification"/>
    <property type="evidence" value="ECO:0007669"/>
    <property type="project" value="TreeGrafter"/>
</dbReference>
<dbReference type="GO" id="GO:0006412">
    <property type="term" value="P:translation"/>
    <property type="evidence" value="ECO:0007669"/>
    <property type="project" value="UniProtKB-UniRule"/>
</dbReference>
<dbReference type="CDD" id="cd00487">
    <property type="entry name" value="Pep_deformylase"/>
    <property type="match status" value="1"/>
</dbReference>
<dbReference type="Gene3D" id="3.90.45.10">
    <property type="entry name" value="Peptide deformylase"/>
    <property type="match status" value="1"/>
</dbReference>
<dbReference type="HAMAP" id="MF_00163">
    <property type="entry name" value="Pep_deformylase"/>
    <property type="match status" value="1"/>
</dbReference>
<dbReference type="InterPro" id="IPR023635">
    <property type="entry name" value="Peptide_deformylase"/>
</dbReference>
<dbReference type="InterPro" id="IPR036821">
    <property type="entry name" value="Peptide_deformylase_sf"/>
</dbReference>
<dbReference type="NCBIfam" id="TIGR00079">
    <property type="entry name" value="pept_deformyl"/>
    <property type="match status" value="1"/>
</dbReference>
<dbReference type="NCBIfam" id="NF001159">
    <property type="entry name" value="PRK00150.1-3"/>
    <property type="match status" value="1"/>
</dbReference>
<dbReference type="PANTHER" id="PTHR10458">
    <property type="entry name" value="PEPTIDE DEFORMYLASE"/>
    <property type="match status" value="1"/>
</dbReference>
<dbReference type="PANTHER" id="PTHR10458:SF22">
    <property type="entry name" value="PEPTIDE DEFORMYLASE"/>
    <property type="match status" value="1"/>
</dbReference>
<dbReference type="Pfam" id="PF01327">
    <property type="entry name" value="Pep_deformylase"/>
    <property type="match status" value="1"/>
</dbReference>
<dbReference type="PIRSF" id="PIRSF004749">
    <property type="entry name" value="Pep_def"/>
    <property type="match status" value="1"/>
</dbReference>
<dbReference type="PRINTS" id="PR01576">
    <property type="entry name" value="PDEFORMYLASE"/>
</dbReference>
<dbReference type="SUPFAM" id="SSF56420">
    <property type="entry name" value="Peptide deformylase"/>
    <property type="match status" value="1"/>
</dbReference>
<feature type="chain" id="PRO_1000097323" description="Peptide deformylase">
    <location>
        <begin position="1"/>
        <end position="190"/>
    </location>
</feature>
<feature type="active site" evidence="1">
    <location>
        <position position="149"/>
    </location>
</feature>
<feature type="binding site" evidence="1">
    <location>
        <position position="106"/>
    </location>
    <ligand>
        <name>Fe cation</name>
        <dbReference type="ChEBI" id="CHEBI:24875"/>
    </ligand>
</feature>
<feature type="binding site" evidence="1">
    <location>
        <position position="148"/>
    </location>
    <ligand>
        <name>Fe cation</name>
        <dbReference type="ChEBI" id="CHEBI:24875"/>
    </ligand>
</feature>
<feature type="binding site" evidence="1">
    <location>
        <position position="152"/>
    </location>
    <ligand>
        <name>Fe cation</name>
        <dbReference type="ChEBI" id="CHEBI:24875"/>
    </ligand>
</feature>
<proteinExistence type="inferred from homology"/>
<comment type="function">
    <text evidence="1">Removes the formyl group from the N-terminal Met of newly synthesized proteins. Requires at least a dipeptide for an efficient rate of reaction. N-terminal L-methionine is a prerequisite for activity but the enzyme has broad specificity at other positions.</text>
</comment>
<comment type="catalytic activity">
    <reaction evidence="1">
        <text>N-terminal N-formyl-L-methionyl-[peptide] + H2O = N-terminal L-methionyl-[peptide] + formate</text>
        <dbReference type="Rhea" id="RHEA:24420"/>
        <dbReference type="Rhea" id="RHEA-COMP:10639"/>
        <dbReference type="Rhea" id="RHEA-COMP:10640"/>
        <dbReference type="ChEBI" id="CHEBI:15377"/>
        <dbReference type="ChEBI" id="CHEBI:15740"/>
        <dbReference type="ChEBI" id="CHEBI:49298"/>
        <dbReference type="ChEBI" id="CHEBI:64731"/>
        <dbReference type="EC" id="3.5.1.88"/>
    </reaction>
</comment>
<comment type="cofactor">
    <cofactor evidence="1">
        <name>Fe(2+)</name>
        <dbReference type="ChEBI" id="CHEBI:29033"/>
    </cofactor>
    <text evidence="1">Binds 1 Fe(2+) ion.</text>
</comment>
<comment type="similarity">
    <text evidence="1">Belongs to the polypeptide deformylase family.</text>
</comment>
<gene>
    <name evidence="1" type="primary">def</name>
    <name type="ordered locus">Minf_0917</name>
</gene>
<keyword id="KW-0378">Hydrolase</keyword>
<keyword id="KW-0408">Iron</keyword>
<keyword id="KW-0479">Metal-binding</keyword>
<keyword id="KW-0648">Protein biosynthesis</keyword>
<evidence type="ECO:0000255" key="1">
    <source>
        <dbReference type="HAMAP-Rule" id="MF_00163"/>
    </source>
</evidence>